<protein>
    <recommendedName>
        <fullName evidence="2">Adenylosuccinate synthetase 2, chloroplastic</fullName>
        <shortName evidence="2">AMPSase 2</shortName>
        <shortName evidence="2">AdSS 2</shortName>
        <ecNumber evidence="2">6.3.4.4</ecNumber>
    </recommendedName>
    <alternativeName>
        <fullName evidence="2">IMP--aspartate ligase 2</fullName>
    </alternativeName>
</protein>
<feature type="chain" id="PRO_0000399273" description="Adenylosuccinate synthetase 2, chloroplastic">
    <location>
        <begin position="1"/>
        <end position="501"/>
    </location>
</feature>
<feature type="active site" description="Proton acceptor" evidence="2">
    <location>
        <position position="88"/>
    </location>
</feature>
<feature type="active site" description="Proton donor" evidence="2">
    <location>
        <position position="116"/>
    </location>
</feature>
<feature type="binding site" evidence="2">
    <location>
        <begin position="87"/>
        <end position="93"/>
    </location>
    <ligand>
        <name>GTP</name>
        <dbReference type="ChEBI" id="CHEBI:37565"/>
    </ligand>
</feature>
<feature type="binding site" description="in other chain" evidence="2">
    <location>
        <begin position="88"/>
        <end position="91"/>
    </location>
    <ligand>
        <name>IMP</name>
        <dbReference type="ChEBI" id="CHEBI:58053"/>
        <note>ligand shared between dimeric partners</note>
    </ligand>
</feature>
<feature type="binding site" evidence="2">
    <location>
        <position position="88"/>
    </location>
    <ligand>
        <name>Mg(2+)</name>
        <dbReference type="ChEBI" id="CHEBI:18420"/>
    </ligand>
</feature>
<feature type="binding site" description="in other chain" evidence="2">
    <location>
        <begin position="113"/>
        <end position="116"/>
    </location>
    <ligand>
        <name>IMP</name>
        <dbReference type="ChEBI" id="CHEBI:58053"/>
        <note>ligand shared between dimeric partners</note>
    </ligand>
</feature>
<feature type="binding site" evidence="2">
    <location>
        <begin position="115"/>
        <end position="117"/>
    </location>
    <ligand>
        <name>GTP</name>
        <dbReference type="ChEBI" id="CHEBI:37565"/>
    </ligand>
</feature>
<feature type="binding site" evidence="2">
    <location>
        <position position="115"/>
    </location>
    <ligand>
        <name>Mg(2+)</name>
        <dbReference type="ChEBI" id="CHEBI:18420"/>
    </ligand>
</feature>
<feature type="binding site" description="in other chain" evidence="2">
    <location>
        <position position="205"/>
    </location>
    <ligand>
        <name>IMP</name>
        <dbReference type="ChEBI" id="CHEBI:58053"/>
        <note>ligand shared between dimeric partners</note>
    </ligand>
</feature>
<feature type="binding site" evidence="2">
    <location>
        <position position="219"/>
    </location>
    <ligand>
        <name>IMP</name>
        <dbReference type="ChEBI" id="CHEBI:58053"/>
        <note>ligand shared between dimeric partners</note>
    </ligand>
</feature>
<feature type="binding site" description="in other chain" evidence="2">
    <location>
        <position position="300"/>
    </location>
    <ligand>
        <name>IMP</name>
        <dbReference type="ChEBI" id="CHEBI:58053"/>
        <note>ligand shared between dimeric partners</note>
    </ligand>
</feature>
<feature type="binding site" description="in other chain" evidence="2">
    <location>
        <position position="315"/>
    </location>
    <ligand>
        <name>IMP</name>
        <dbReference type="ChEBI" id="CHEBI:58053"/>
        <note>ligand shared between dimeric partners</note>
    </ligand>
</feature>
<feature type="binding site" evidence="2">
    <location>
        <begin position="375"/>
        <end position="381"/>
    </location>
    <ligand>
        <name>substrate</name>
    </ligand>
</feature>
<feature type="binding site" description="in other chain" evidence="2">
    <location>
        <position position="379"/>
    </location>
    <ligand>
        <name>IMP</name>
        <dbReference type="ChEBI" id="CHEBI:58053"/>
        <note>ligand shared between dimeric partners</note>
    </ligand>
</feature>
<feature type="binding site" evidence="2">
    <location>
        <position position="381"/>
    </location>
    <ligand>
        <name>GTP</name>
        <dbReference type="ChEBI" id="CHEBI:37565"/>
    </ligand>
</feature>
<feature type="binding site" evidence="2">
    <location>
        <begin position="407"/>
        <end position="409"/>
    </location>
    <ligand>
        <name>GTP</name>
        <dbReference type="ChEBI" id="CHEBI:37565"/>
    </ligand>
</feature>
<feature type="binding site" evidence="2">
    <location>
        <begin position="490"/>
        <end position="492"/>
    </location>
    <ligand>
        <name>GTP</name>
        <dbReference type="ChEBI" id="CHEBI:37565"/>
    </ligand>
</feature>
<organism>
    <name type="scientific">Capsicum frutescens</name>
    <name type="common">Cayenne pepper</name>
    <name type="synonym">Tabasco pepper</name>
    <dbReference type="NCBI Taxonomy" id="4073"/>
    <lineage>
        <taxon>Eukaryota</taxon>
        <taxon>Viridiplantae</taxon>
        <taxon>Streptophyta</taxon>
        <taxon>Embryophyta</taxon>
        <taxon>Tracheophyta</taxon>
        <taxon>Spermatophyta</taxon>
        <taxon>Magnoliopsida</taxon>
        <taxon>eudicotyledons</taxon>
        <taxon>Gunneridae</taxon>
        <taxon>Pentapetalae</taxon>
        <taxon>asterids</taxon>
        <taxon>lamiids</taxon>
        <taxon>Solanales</taxon>
        <taxon>Solanaceae</taxon>
        <taxon>Solanoideae</taxon>
        <taxon>Capsiceae</taxon>
        <taxon>Capsicum</taxon>
    </lineage>
</organism>
<proteinExistence type="inferred from homology"/>
<name>PURA2_CAPFR</name>
<gene>
    <name evidence="2" type="primary">PURA2</name>
    <name type="ORF">7P.PEPPER.6</name>
</gene>
<dbReference type="EC" id="6.3.4.4" evidence="2"/>
<dbReference type="EMBL" id="EF517792">
    <property type="protein sequence ID" value="ABU45186.1"/>
    <property type="molecule type" value="Genomic_DNA"/>
</dbReference>
<dbReference type="SMR" id="A9XLE2"/>
<dbReference type="UniPathway" id="UPA00075">
    <property type="reaction ID" value="UER00335"/>
</dbReference>
<dbReference type="GO" id="GO:0009507">
    <property type="term" value="C:chloroplast"/>
    <property type="evidence" value="ECO:0007669"/>
    <property type="project" value="UniProtKB-SubCell"/>
</dbReference>
<dbReference type="GO" id="GO:0004019">
    <property type="term" value="F:adenylosuccinate synthase activity"/>
    <property type="evidence" value="ECO:0007669"/>
    <property type="project" value="UniProtKB-UniRule"/>
</dbReference>
<dbReference type="GO" id="GO:0005525">
    <property type="term" value="F:GTP binding"/>
    <property type="evidence" value="ECO:0007669"/>
    <property type="project" value="UniProtKB-UniRule"/>
</dbReference>
<dbReference type="GO" id="GO:0000287">
    <property type="term" value="F:magnesium ion binding"/>
    <property type="evidence" value="ECO:0007669"/>
    <property type="project" value="UniProtKB-UniRule"/>
</dbReference>
<dbReference type="GO" id="GO:0044208">
    <property type="term" value="P:'de novo' AMP biosynthetic process"/>
    <property type="evidence" value="ECO:0007669"/>
    <property type="project" value="UniProtKB-UniRule"/>
</dbReference>
<dbReference type="GO" id="GO:0046040">
    <property type="term" value="P:IMP metabolic process"/>
    <property type="evidence" value="ECO:0007669"/>
    <property type="project" value="TreeGrafter"/>
</dbReference>
<dbReference type="CDD" id="cd03108">
    <property type="entry name" value="AdSS"/>
    <property type="match status" value="1"/>
</dbReference>
<dbReference type="FunFam" id="3.90.170.10:FF:000001">
    <property type="entry name" value="Adenylosuccinate synthetase"/>
    <property type="match status" value="1"/>
</dbReference>
<dbReference type="FunFam" id="1.10.300.10:FF:000002">
    <property type="entry name" value="Adenylosuccinate synthetase, chloroplastic"/>
    <property type="match status" value="1"/>
</dbReference>
<dbReference type="Gene3D" id="3.40.440.10">
    <property type="entry name" value="Adenylosuccinate Synthetase, subunit A, domain 1"/>
    <property type="match status" value="1"/>
</dbReference>
<dbReference type="Gene3D" id="1.10.300.10">
    <property type="entry name" value="Adenylosuccinate Synthetase, subunit A, domain 2"/>
    <property type="match status" value="1"/>
</dbReference>
<dbReference type="Gene3D" id="3.90.170.10">
    <property type="entry name" value="Adenylosuccinate Synthetase, subunit A, domain 3"/>
    <property type="match status" value="1"/>
</dbReference>
<dbReference type="HAMAP" id="MF_00011">
    <property type="entry name" value="Adenylosucc_synth"/>
    <property type="match status" value="1"/>
</dbReference>
<dbReference type="InterPro" id="IPR033128">
    <property type="entry name" value="Adenylosuccin_syn_Lys_AS"/>
</dbReference>
<dbReference type="InterPro" id="IPR042109">
    <property type="entry name" value="Adenylosuccinate_synth_dom1"/>
</dbReference>
<dbReference type="InterPro" id="IPR042110">
    <property type="entry name" value="Adenylosuccinate_synth_dom2"/>
</dbReference>
<dbReference type="InterPro" id="IPR042111">
    <property type="entry name" value="Adenylosuccinate_synth_dom3"/>
</dbReference>
<dbReference type="InterPro" id="IPR001114">
    <property type="entry name" value="Adenylosuccinate_synthetase"/>
</dbReference>
<dbReference type="InterPro" id="IPR027417">
    <property type="entry name" value="P-loop_NTPase"/>
</dbReference>
<dbReference type="NCBIfam" id="NF002223">
    <property type="entry name" value="PRK01117.1"/>
    <property type="match status" value="1"/>
</dbReference>
<dbReference type="NCBIfam" id="TIGR00184">
    <property type="entry name" value="purA"/>
    <property type="match status" value="1"/>
</dbReference>
<dbReference type="PANTHER" id="PTHR11846">
    <property type="entry name" value="ADENYLOSUCCINATE SYNTHETASE"/>
    <property type="match status" value="1"/>
</dbReference>
<dbReference type="PANTHER" id="PTHR11846:SF18">
    <property type="entry name" value="ADENYLOSUCCINATE SYNTHETASE, CHLOROPLASTIC"/>
    <property type="match status" value="1"/>
</dbReference>
<dbReference type="Pfam" id="PF00709">
    <property type="entry name" value="Adenylsucc_synt"/>
    <property type="match status" value="1"/>
</dbReference>
<dbReference type="SMART" id="SM00788">
    <property type="entry name" value="Adenylsucc_synt"/>
    <property type="match status" value="1"/>
</dbReference>
<dbReference type="SUPFAM" id="SSF52540">
    <property type="entry name" value="P-loop containing nucleoside triphosphate hydrolases"/>
    <property type="match status" value="1"/>
</dbReference>
<dbReference type="PROSITE" id="PS00513">
    <property type="entry name" value="ADENYLOSUCCIN_SYN_2"/>
    <property type="match status" value="1"/>
</dbReference>
<keyword id="KW-0150">Chloroplast</keyword>
<keyword id="KW-0342">GTP-binding</keyword>
<keyword id="KW-0436">Ligase</keyword>
<keyword id="KW-0460">Magnesium</keyword>
<keyword id="KW-0479">Metal-binding</keyword>
<keyword id="KW-0547">Nucleotide-binding</keyword>
<keyword id="KW-0934">Plastid</keyword>
<keyword id="KW-0658">Purine biosynthesis</keyword>
<evidence type="ECO:0000250" key="1"/>
<evidence type="ECO:0000255" key="2">
    <source>
        <dbReference type="HAMAP-Rule" id="MF_03125"/>
    </source>
</evidence>
<accession>A9XLE2</accession>
<reference key="1">
    <citation type="journal article" date="2008" name="Genetics">
        <title>Sequencing and comparative analysis of a conserved syntenic segment in the solanaceae.</title>
        <authorList>
            <person name="Wang Y."/>
            <person name="Diehl A."/>
            <person name="Wu F."/>
            <person name="Vrebalov J."/>
            <person name="Giovannoni J."/>
            <person name="Siepel A."/>
            <person name="Tanksley S.D."/>
        </authorList>
    </citation>
    <scope>NUCLEOTIDE SEQUENCE [GENOMIC DNA]</scope>
</reference>
<sequence length="501" mass="54473">MNMSALTFNSTPMITTATATDDRSRILGYNGTHSCSRLSRKKNPSIMACSTTKPLAPVVDHHGVNESGLSRIESLSQVSGVLGCQSGDEGKGKLVDMLARHFDIVARCQGGANAGHTIYNSEGKKFLLHLVPSGILNEGTTCVIGNGVVVHLPGLFKEIDGLESNGVSSQGRILVSDRAHLLFDFHQEIDGLREAELAKSFIGTTKRGIGPCYSSKVIRNGIRVSDLRHMDTFSQKLDLLLSDAAARFPDFKYGGPDMLKEEVERYKKFAERLEPFVTDTVHFINGAISQKKKILVEGSQATMLDIDFGTYPFVTSSSSVAGGICTGLGIAPRVVGDLVGVVKAYTTRVGSGPFPTEITGKVGDFLRSAGQEFGNITGRPRRCGWLDIVAVRYCCQINGFASLNLSKLDLLSDLSKIQLGVTYRLPDGSILNSFPSDLHLLEHIKVKYEVLPGWLSDISSIRKYSDLPKAAREYVERIEELVGVPIHYIGIGPGRDAFLYK</sequence>
<comment type="function">
    <text evidence="1">Plays an important role in the de novo pathway and in the salvage pathway of purine nucleotide biosynthesis. Catalyzes the first committed step in the biosynthesis of AMP from IMP (By similarity).</text>
</comment>
<comment type="catalytic activity">
    <reaction evidence="2">
        <text>IMP + L-aspartate + GTP = N(6)-(1,2-dicarboxyethyl)-AMP + GDP + phosphate + 2 H(+)</text>
        <dbReference type="Rhea" id="RHEA:15753"/>
        <dbReference type="ChEBI" id="CHEBI:15378"/>
        <dbReference type="ChEBI" id="CHEBI:29991"/>
        <dbReference type="ChEBI" id="CHEBI:37565"/>
        <dbReference type="ChEBI" id="CHEBI:43474"/>
        <dbReference type="ChEBI" id="CHEBI:57567"/>
        <dbReference type="ChEBI" id="CHEBI:58053"/>
        <dbReference type="ChEBI" id="CHEBI:58189"/>
        <dbReference type="EC" id="6.3.4.4"/>
    </reaction>
</comment>
<comment type="cofactor">
    <cofactor evidence="2">
        <name>Mg(2+)</name>
        <dbReference type="ChEBI" id="CHEBI:18420"/>
    </cofactor>
    <text evidence="2">Binds 1 Mg(2+) ion per subunit.</text>
</comment>
<comment type="pathway">
    <text evidence="2">Purine metabolism; AMP biosynthesis via de novo pathway; AMP from IMP: step 1/2.</text>
</comment>
<comment type="subunit">
    <text evidence="2">Homodimer.</text>
</comment>
<comment type="subcellular location">
    <subcellularLocation>
        <location evidence="2">Plastid</location>
        <location evidence="2">Chloroplast</location>
    </subcellularLocation>
</comment>
<comment type="miscellaneous">
    <text evidence="2">This protein may be expected to contain an N-terminal transit peptide but none has been predicted.</text>
</comment>
<comment type="similarity">
    <text evidence="2">Belongs to the adenylosuccinate synthetase family.</text>
</comment>